<protein>
    <recommendedName>
        <fullName evidence="1">Glucosamine-6-phosphate deaminase</fullName>
        <ecNumber evidence="1">3.5.99.6</ecNumber>
    </recommendedName>
    <alternativeName>
        <fullName evidence="1">GlcN6P deaminase</fullName>
        <shortName evidence="1">GNPDA</shortName>
    </alternativeName>
    <alternativeName>
        <fullName evidence="1">Glucosamine-6-phosphate isomerase</fullName>
    </alternativeName>
</protein>
<feature type="chain" id="PRO_1000067020" description="Glucosamine-6-phosphate deaminase">
    <location>
        <begin position="1"/>
        <end position="266"/>
    </location>
</feature>
<feature type="active site" description="Proton acceptor; for enolization step" evidence="1">
    <location>
        <position position="72"/>
    </location>
</feature>
<feature type="active site" description="For ring-opening step" evidence="1">
    <location>
        <position position="141"/>
    </location>
</feature>
<feature type="active site" description="Proton acceptor; for ring-opening step" evidence="1">
    <location>
        <position position="143"/>
    </location>
</feature>
<feature type="active site" description="For ring-opening step" evidence="1">
    <location>
        <position position="148"/>
    </location>
</feature>
<feature type="site" description="Part of the allosteric site" evidence="1">
    <location>
        <position position="151"/>
    </location>
</feature>
<feature type="site" description="Part of the allosteric site" evidence="1">
    <location>
        <position position="158"/>
    </location>
</feature>
<feature type="site" description="Part of the allosteric site" evidence="1">
    <location>
        <position position="160"/>
    </location>
</feature>
<feature type="site" description="Part of the allosteric site" evidence="1">
    <location>
        <position position="161"/>
    </location>
</feature>
<feature type="site" description="Part of the allosteric site" evidence="1">
    <location>
        <position position="254"/>
    </location>
</feature>
<feature type="disulfide bond" description="Interchain" evidence="1">
    <location>
        <position position="219"/>
    </location>
</feature>
<accession>Q0T6S6</accession>
<gene>
    <name evidence="1" type="primary">nagB</name>
    <name type="ordered locus">SFV_0653</name>
</gene>
<evidence type="ECO:0000255" key="1">
    <source>
        <dbReference type="HAMAP-Rule" id="MF_01241"/>
    </source>
</evidence>
<keyword id="KW-0021">Allosteric enzyme</keyword>
<keyword id="KW-0119">Carbohydrate metabolism</keyword>
<keyword id="KW-1015">Disulfide bond</keyword>
<keyword id="KW-0378">Hydrolase</keyword>
<organism>
    <name type="scientific">Shigella flexneri serotype 5b (strain 8401)</name>
    <dbReference type="NCBI Taxonomy" id="373384"/>
    <lineage>
        <taxon>Bacteria</taxon>
        <taxon>Pseudomonadati</taxon>
        <taxon>Pseudomonadota</taxon>
        <taxon>Gammaproteobacteria</taxon>
        <taxon>Enterobacterales</taxon>
        <taxon>Enterobacteriaceae</taxon>
        <taxon>Shigella</taxon>
    </lineage>
</organism>
<name>NAGB_SHIF8</name>
<reference key="1">
    <citation type="journal article" date="2006" name="BMC Genomics">
        <title>Complete genome sequence of Shigella flexneri 5b and comparison with Shigella flexneri 2a.</title>
        <authorList>
            <person name="Nie H."/>
            <person name="Yang F."/>
            <person name="Zhang X."/>
            <person name="Yang J."/>
            <person name="Chen L."/>
            <person name="Wang J."/>
            <person name="Xiong Z."/>
            <person name="Peng J."/>
            <person name="Sun L."/>
            <person name="Dong J."/>
            <person name="Xue Y."/>
            <person name="Xu X."/>
            <person name="Chen S."/>
            <person name="Yao Z."/>
            <person name="Shen Y."/>
            <person name="Jin Q."/>
        </authorList>
    </citation>
    <scope>NUCLEOTIDE SEQUENCE [LARGE SCALE GENOMIC DNA]</scope>
    <source>
        <strain>8401</strain>
    </source>
</reference>
<sequence length="266" mass="29792">MRLIPLTTAEQVGKWAARHIVNRINAFKPTADRPFVLGLPTGGTPMTTYKALVEMHKAGQVSFKHVVTFNMDEYVGLPKEHPESYYSFMHRNFFDHVDIPAENINLLNGNAPDIDAECRQYEEKIRSYGKIHLFMGGVGNDGHIAFNEPASSLASRTRIKTLTHDTRVANSRFFDNDVNQVPKYALTVGVGTLLDAEEVMIMVLGSQKALALQAAVEGCVNHMWTISCLQLHPKAIMVCDEPSTMELKVKTLRYFNELEAENIKGL</sequence>
<proteinExistence type="inferred from homology"/>
<comment type="function">
    <text evidence="1">Catalyzes the reversible isomerization-deamination of glucosamine 6-phosphate (GlcN6P) to form fructose 6-phosphate (Fru6P) and ammonium ion.</text>
</comment>
<comment type="catalytic activity">
    <reaction evidence="1">
        <text>alpha-D-glucosamine 6-phosphate + H2O = beta-D-fructose 6-phosphate + NH4(+)</text>
        <dbReference type="Rhea" id="RHEA:12172"/>
        <dbReference type="ChEBI" id="CHEBI:15377"/>
        <dbReference type="ChEBI" id="CHEBI:28938"/>
        <dbReference type="ChEBI" id="CHEBI:57634"/>
        <dbReference type="ChEBI" id="CHEBI:75989"/>
        <dbReference type="EC" id="3.5.99.6"/>
    </reaction>
</comment>
<comment type="activity regulation">
    <text evidence="1">Allosterically activated by N-acetylglucosamine 6-phosphate (GlcNAc6P).</text>
</comment>
<comment type="pathway">
    <text evidence="1">Amino-sugar metabolism; N-acetylneuraminate degradation; D-fructose 6-phosphate from N-acetylneuraminate: step 5/5.</text>
</comment>
<comment type="subunit">
    <text evidence="1">Homohexamer; trimer of disulfide-linked dimers.</text>
</comment>
<comment type="similarity">
    <text evidence="1">Belongs to the glucosamine/galactosamine-6-phosphate isomerase family. NagB subfamily.</text>
</comment>
<dbReference type="EC" id="3.5.99.6" evidence="1"/>
<dbReference type="EMBL" id="CP000266">
    <property type="protein sequence ID" value="ABF02900.1"/>
    <property type="molecule type" value="Genomic_DNA"/>
</dbReference>
<dbReference type="RefSeq" id="WP_001237076.1">
    <property type="nucleotide sequence ID" value="NC_008258.1"/>
</dbReference>
<dbReference type="SMR" id="Q0T6S6"/>
<dbReference type="KEGG" id="sfv:SFV_0653"/>
<dbReference type="HOGENOM" id="CLU_049611_0_1_6"/>
<dbReference type="UniPathway" id="UPA00629">
    <property type="reaction ID" value="UER00684"/>
</dbReference>
<dbReference type="Proteomes" id="UP000000659">
    <property type="component" value="Chromosome"/>
</dbReference>
<dbReference type="GO" id="GO:0005829">
    <property type="term" value="C:cytosol"/>
    <property type="evidence" value="ECO:0007669"/>
    <property type="project" value="TreeGrafter"/>
</dbReference>
<dbReference type="GO" id="GO:0004342">
    <property type="term" value="F:glucosamine-6-phosphate deaminase activity"/>
    <property type="evidence" value="ECO:0007669"/>
    <property type="project" value="UniProtKB-UniRule"/>
</dbReference>
<dbReference type="GO" id="GO:0042802">
    <property type="term" value="F:identical protein binding"/>
    <property type="evidence" value="ECO:0007669"/>
    <property type="project" value="TreeGrafter"/>
</dbReference>
<dbReference type="GO" id="GO:0005975">
    <property type="term" value="P:carbohydrate metabolic process"/>
    <property type="evidence" value="ECO:0007669"/>
    <property type="project" value="InterPro"/>
</dbReference>
<dbReference type="GO" id="GO:0006043">
    <property type="term" value="P:glucosamine catabolic process"/>
    <property type="evidence" value="ECO:0007669"/>
    <property type="project" value="TreeGrafter"/>
</dbReference>
<dbReference type="GO" id="GO:0006046">
    <property type="term" value="P:N-acetylglucosamine catabolic process"/>
    <property type="evidence" value="ECO:0007669"/>
    <property type="project" value="TreeGrafter"/>
</dbReference>
<dbReference type="GO" id="GO:0019262">
    <property type="term" value="P:N-acetylneuraminate catabolic process"/>
    <property type="evidence" value="ECO:0007669"/>
    <property type="project" value="UniProtKB-UniRule"/>
</dbReference>
<dbReference type="CDD" id="cd01399">
    <property type="entry name" value="GlcN6P_deaminase"/>
    <property type="match status" value="1"/>
</dbReference>
<dbReference type="FunFam" id="3.40.50.1360:FF:000002">
    <property type="entry name" value="Glucosamine-6-phosphate deaminase"/>
    <property type="match status" value="1"/>
</dbReference>
<dbReference type="Gene3D" id="3.40.50.1360">
    <property type="match status" value="1"/>
</dbReference>
<dbReference type="HAMAP" id="MF_01241">
    <property type="entry name" value="GlcN6P_deamin"/>
    <property type="match status" value="1"/>
</dbReference>
<dbReference type="InterPro" id="IPR006148">
    <property type="entry name" value="Glc/Gal-6P_isomerase"/>
</dbReference>
<dbReference type="InterPro" id="IPR004547">
    <property type="entry name" value="Glucosamine6P_isomerase"/>
</dbReference>
<dbReference type="InterPro" id="IPR018321">
    <property type="entry name" value="Glucosamine6P_isomerase_CS"/>
</dbReference>
<dbReference type="InterPro" id="IPR037171">
    <property type="entry name" value="NagB/RpiA_transferase-like"/>
</dbReference>
<dbReference type="NCBIfam" id="TIGR00502">
    <property type="entry name" value="nagB"/>
    <property type="match status" value="1"/>
</dbReference>
<dbReference type="NCBIfam" id="NF001685">
    <property type="entry name" value="PRK00443.1-5"/>
    <property type="match status" value="1"/>
</dbReference>
<dbReference type="PANTHER" id="PTHR11280">
    <property type="entry name" value="GLUCOSAMINE-6-PHOSPHATE ISOMERASE"/>
    <property type="match status" value="1"/>
</dbReference>
<dbReference type="PANTHER" id="PTHR11280:SF5">
    <property type="entry name" value="GLUCOSAMINE-6-PHOSPHATE ISOMERASE"/>
    <property type="match status" value="1"/>
</dbReference>
<dbReference type="Pfam" id="PF01182">
    <property type="entry name" value="Glucosamine_iso"/>
    <property type="match status" value="1"/>
</dbReference>
<dbReference type="SUPFAM" id="SSF100950">
    <property type="entry name" value="NagB/RpiA/CoA transferase-like"/>
    <property type="match status" value="1"/>
</dbReference>
<dbReference type="PROSITE" id="PS01161">
    <property type="entry name" value="GLC_GALNAC_ISOMERASE"/>
    <property type="match status" value="1"/>
</dbReference>